<name>YIOB_SCHPO</name>
<protein>
    <recommendedName>
        <fullName>Uncharacterized protein P27G11.11c</fullName>
    </recommendedName>
</protein>
<gene>
    <name type="ORF">SPAP27G11.11c</name>
</gene>
<accession>Q9P7M7</accession>
<feature type="chain" id="PRO_0000116794" description="Uncharacterized protein P27G11.11c">
    <location>
        <begin position="1"/>
        <end position="73"/>
    </location>
</feature>
<keyword id="KW-1185">Reference proteome</keyword>
<reference key="1">
    <citation type="journal article" date="2002" name="Nature">
        <title>The genome sequence of Schizosaccharomyces pombe.</title>
        <authorList>
            <person name="Wood V."/>
            <person name="Gwilliam R."/>
            <person name="Rajandream M.A."/>
            <person name="Lyne M.H."/>
            <person name="Lyne R."/>
            <person name="Stewart A."/>
            <person name="Sgouros J.G."/>
            <person name="Peat N."/>
            <person name="Hayles J."/>
            <person name="Baker S.G."/>
            <person name="Basham D."/>
            <person name="Bowman S."/>
            <person name="Brooks K."/>
            <person name="Brown D."/>
            <person name="Brown S."/>
            <person name="Chillingworth T."/>
            <person name="Churcher C.M."/>
            <person name="Collins M."/>
            <person name="Connor R."/>
            <person name="Cronin A."/>
            <person name="Davis P."/>
            <person name="Feltwell T."/>
            <person name="Fraser A."/>
            <person name="Gentles S."/>
            <person name="Goble A."/>
            <person name="Hamlin N."/>
            <person name="Harris D.E."/>
            <person name="Hidalgo J."/>
            <person name="Hodgson G."/>
            <person name="Holroyd S."/>
            <person name="Hornsby T."/>
            <person name="Howarth S."/>
            <person name="Huckle E.J."/>
            <person name="Hunt S."/>
            <person name="Jagels K."/>
            <person name="James K.D."/>
            <person name="Jones L."/>
            <person name="Jones M."/>
            <person name="Leather S."/>
            <person name="McDonald S."/>
            <person name="McLean J."/>
            <person name="Mooney P."/>
            <person name="Moule S."/>
            <person name="Mungall K.L."/>
            <person name="Murphy L.D."/>
            <person name="Niblett D."/>
            <person name="Odell C."/>
            <person name="Oliver K."/>
            <person name="O'Neil S."/>
            <person name="Pearson D."/>
            <person name="Quail M.A."/>
            <person name="Rabbinowitsch E."/>
            <person name="Rutherford K.M."/>
            <person name="Rutter S."/>
            <person name="Saunders D."/>
            <person name="Seeger K."/>
            <person name="Sharp S."/>
            <person name="Skelton J."/>
            <person name="Simmonds M.N."/>
            <person name="Squares R."/>
            <person name="Squares S."/>
            <person name="Stevens K."/>
            <person name="Taylor K."/>
            <person name="Taylor R.G."/>
            <person name="Tivey A."/>
            <person name="Walsh S.V."/>
            <person name="Warren T."/>
            <person name="Whitehead S."/>
            <person name="Woodward J.R."/>
            <person name="Volckaert G."/>
            <person name="Aert R."/>
            <person name="Robben J."/>
            <person name="Grymonprez B."/>
            <person name="Weltjens I."/>
            <person name="Vanstreels E."/>
            <person name="Rieger M."/>
            <person name="Schaefer M."/>
            <person name="Mueller-Auer S."/>
            <person name="Gabel C."/>
            <person name="Fuchs M."/>
            <person name="Duesterhoeft A."/>
            <person name="Fritzc C."/>
            <person name="Holzer E."/>
            <person name="Moestl D."/>
            <person name="Hilbert H."/>
            <person name="Borzym K."/>
            <person name="Langer I."/>
            <person name="Beck A."/>
            <person name="Lehrach H."/>
            <person name="Reinhardt R."/>
            <person name="Pohl T.M."/>
            <person name="Eger P."/>
            <person name="Zimmermann W."/>
            <person name="Wedler H."/>
            <person name="Wambutt R."/>
            <person name="Purnelle B."/>
            <person name="Goffeau A."/>
            <person name="Cadieu E."/>
            <person name="Dreano S."/>
            <person name="Gloux S."/>
            <person name="Lelaure V."/>
            <person name="Mottier S."/>
            <person name="Galibert F."/>
            <person name="Aves S.J."/>
            <person name="Xiang Z."/>
            <person name="Hunt C."/>
            <person name="Moore K."/>
            <person name="Hurst S.M."/>
            <person name="Lucas M."/>
            <person name="Rochet M."/>
            <person name="Gaillardin C."/>
            <person name="Tallada V.A."/>
            <person name="Garzon A."/>
            <person name="Thode G."/>
            <person name="Daga R.R."/>
            <person name="Cruzado L."/>
            <person name="Jimenez J."/>
            <person name="Sanchez M."/>
            <person name="del Rey F."/>
            <person name="Benito J."/>
            <person name="Dominguez A."/>
            <person name="Revuelta J.L."/>
            <person name="Moreno S."/>
            <person name="Armstrong J."/>
            <person name="Forsburg S.L."/>
            <person name="Cerutti L."/>
            <person name="Lowe T."/>
            <person name="McCombie W.R."/>
            <person name="Paulsen I."/>
            <person name="Potashkin J."/>
            <person name="Shpakovski G.V."/>
            <person name="Ussery D."/>
            <person name="Barrell B.G."/>
            <person name="Nurse P."/>
        </authorList>
    </citation>
    <scope>NUCLEOTIDE SEQUENCE [LARGE SCALE GENOMIC DNA]</scope>
    <source>
        <strain>972 / ATCC 24843</strain>
    </source>
</reference>
<proteinExistence type="predicted"/>
<sequence>MTCNHENPHFLFKIDSYSKTFLLSCYCVSIYRLEECSGRFKPSSYSLHLLKSLSIIICENPSQTFNIGLNQPK</sequence>
<organism>
    <name type="scientific">Schizosaccharomyces pombe (strain 972 / ATCC 24843)</name>
    <name type="common">Fission yeast</name>
    <dbReference type="NCBI Taxonomy" id="284812"/>
    <lineage>
        <taxon>Eukaryota</taxon>
        <taxon>Fungi</taxon>
        <taxon>Dikarya</taxon>
        <taxon>Ascomycota</taxon>
        <taxon>Taphrinomycotina</taxon>
        <taxon>Schizosaccharomycetes</taxon>
        <taxon>Schizosaccharomycetales</taxon>
        <taxon>Schizosaccharomycetaceae</taxon>
        <taxon>Schizosaccharomyces</taxon>
    </lineage>
</organism>
<dbReference type="EMBL" id="CU329670">
    <property type="protein sequence ID" value="CAB76032.1"/>
    <property type="molecule type" value="Genomic_DNA"/>
</dbReference>
<dbReference type="RefSeq" id="NP_593415.1">
    <property type="nucleotide sequence ID" value="NM_001018848.1"/>
</dbReference>
<dbReference type="BioGRID" id="278366">
    <property type="interactions" value="18"/>
</dbReference>
<dbReference type="PaxDb" id="4896-SPAP27G11.11c.1"/>
<dbReference type="EnsemblFungi" id="SPAP27G11.11c.1">
    <property type="protein sequence ID" value="SPAP27G11.11c.1:pep"/>
    <property type="gene ID" value="SPAP27G11.11c"/>
</dbReference>
<dbReference type="KEGG" id="spo:2541876"/>
<dbReference type="PomBase" id="SPAP27G11.11c"/>
<dbReference type="VEuPathDB" id="FungiDB:SPAP27G11.11c"/>
<dbReference type="HOGENOM" id="CLU_2706267_0_0_1"/>
<dbReference type="InParanoid" id="Q9P7M7"/>
<dbReference type="PRO" id="PR:Q9P7M7"/>
<dbReference type="Proteomes" id="UP000002485">
    <property type="component" value="Chromosome I"/>
</dbReference>